<gene>
    <name evidence="1" type="primary">fhs</name>
    <name type="ordered locus">Sputcn32_3314</name>
</gene>
<accession>A4YAP3</accession>
<protein>
    <recommendedName>
        <fullName evidence="1">Formate--tetrahydrofolate ligase</fullName>
        <ecNumber evidence="1">6.3.4.3</ecNumber>
    </recommendedName>
    <alternativeName>
        <fullName evidence="1">Formyltetrahydrofolate synthetase</fullName>
        <shortName evidence="1">FHS</shortName>
        <shortName evidence="1">FTHFS</shortName>
    </alternativeName>
</protein>
<proteinExistence type="inferred from homology"/>
<keyword id="KW-0067">ATP-binding</keyword>
<keyword id="KW-0436">Ligase</keyword>
<keyword id="KW-0547">Nucleotide-binding</keyword>
<keyword id="KW-0554">One-carbon metabolism</keyword>
<feature type="chain" id="PRO_1000068795" description="Formate--tetrahydrofolate ligase">
    <location>
        <begin position="1"/>
        <end position="570"/>
    </location>
</feature>
<feature type="binding site" evidence="1">
    <location>
        <begin position="65"/>
        <end position="72"/>
    </location>
    <ligand>
        <name>ATP</name>
        <dbReference type="ChEBI" id="CHEBI:30616"/>
    </ligand>
</feature>
<organism>
    <name type="scientific">Shewanella putrefaciens (strain CN-32 / ATCC BAA-453)</name>
    <dbReference type="NCBI Taxonomy" id="319224"/>
    <lineage>
        <taxon>Bacteria</taxon>
        <taxon>Pseudomonadati</taxon>
        <taxon>Pseudomonadota</taxon>
        <taxon>Gammaproteobacteria</taxon>
        <taxon>Alteromonadales</taxon>
        <taxon>Shewanellaceae</taxon>
        <taxon>Shewanella</taxon>
    </lineage>
</organism>
<reference key="1">
    <citation type="submission" date="2007-04" db="EMBL/GenBank/DDBJ databases">
        <title>Complete sequence of Shewanella putrefaciens CN-32.</title>
        <authorList>
            <consortium name="US DOE Joint Genome Institute"/>
            <person name="Copeland A."/>
            <person name="Lucas S."/>
            <person name="Lapidus A."/>
            <person name="Barry K."/>
            <person name="Detter J.C."/>
            <person name="Glavina del Rio T."/>
            <person name="Hammon N."/>
            <person name="Israni S."/>
            <person name="Dalin E."/>
            <person name="Tice H."/>
            <person name="Pitluck S."/>
            <person name="Chain P."/>
            <person name="Malfatti S."/>
            <person name="Shin M."/>
            <person name="Vergez L."/>
            <person name="Schmutz J."/>
            <person name="Larimer F."/>
            <person name="Land M."/>
            <person name="Hauser L."/>
            <person name="Kyrpides N."/>
            <person name="Mikhailova N."/>
            <person name="Romine M.F."/>
            <person name="Fredrickson J."/>
            <person name="Tiedje J."/>
            <person name="Richardson P."/>
        </authorList>
    </citation>
    <scope>NUCLEOTIDE SEQUENCE [LARGE SCALE GENOMIC DNA]</scope>
    <source>
        <strain>CN-32 / ATCC BAA-453</strain>
    </source>
</reference>
<name>FTHS_SHEPC</name>
<sequence length="570" mass="60067">MLTDMEISSRASLTNVAELGAELGLLPEEMLLFGSTKAKVDLSVQQRLAGQSRGKLIIVTAVTPTPHGEGKTVTSIGLTQSLKAIGKKACACIRQPSMGPVFGVKGGAAGGGYAQVVPMQELNLHLTGDIHAVSSAHNLGAAAIAARLFHESRLGKVEFEAQSGQAFLDIDPAQIRWHRVLDHNDRCLRQVQVGLGENNGPVYESGFDITAASELMAILALSANLADMRARIGRLVLALNRQGQVISAEDLGVAGAMTAIMVDAIKPTLMQTLNGAPCLIHAGPFANIAHGNSSIIADDIALKLVDYVITEGGFGSDMGFEKFCNIKVRQSGQVPSAAVLVTTLKALKANSGIESDTDINTPDEIRLEAGFANLHWHINNVARYGIPVVVAINRFATDTEAELQWLINAVNQTAAFGCEVSDAFSQGEAGAIELAHTVVRAADTQSQFRLLYPDDASLEAKLSTLAEVGYGAAGISLSDEAKQQVREFTSLGYAHLPVCMAKTPLSISHDPIQKGVPKDFIVPIRALVLNAGAGFVTALVGNVMTMPGLGIKPGYLKIDIDEAGEIIGLG</sequence>
<comment type="catalytic activity">
    <reaction evidence="1">
        <text>(6S)-5,6,7,8-tetrahydrofolate + formate + ATP = (6R)-10-formyltetrahydrofolate + ADP + phosphate</text>
        <dbReference type="Rhea" id="RHEA:20221"/>
        <dbReference type="ChEBI" id="CHEBI:15740"/>
        <dbReference type="ChEBI" id="CHEBI:30616"/>
        <dbReference type="ChEBI" id="CHEBI:43474"/>
        <dbReference type="ChEBI" id="CHEBI:57453"/>
        <dbReference type="ChEBI" id="CHEBI:195366"/>
        <dbReference type="ChEBI" id="CHEBI:456216"/>
        <dbReference type="EC" id="6.3.4.3"/>
    </reaction>
</comment>
<comment type="pathway">
    <text evidence="1">One-carbon metabolism; tetrahydrofolate interconversion.</text>
</comment>
<comment type="similarity">
    <text evidence="1">Belongs to the formate--tetrahydrofolate ligase family.</text>
</comment>
<evidence type="ECO:0000255" key="1">
    <source>
        <dbReference type="HAMAP-Rule" id="MF_01543"/>
    </source>
</evidence>
<dbReference type="EC" id="6.3.4.3" evidence="1"/>
<dbReference type="EMBL" id="CP000681">
    <property type="protein sequence ID" value="ABP77026.1"/>
    <property type="molecule type" value="Genomic_DNA"/>
</dbReference>
<dbReference type="SMR" id="A4YAP3"/>
<dbReference type="STRING" id="319224.Sputcn32_3314"/>
<dbReference type="KEGG" id="spc:Sputcn32_3314"/>
<dbReference type="eggNOG" id="COG2759">
    <property type="taxonomic scope" value="Bacteria"/>
</dbReference>
<dbReference type="HOGENOM" id="CLU_003601_3_3_6"/>
<dbReference type="UniPathway" id="UPA00193"/>
<dbReference type="GO" id="GO:0005524">
    <property type="term" value="F:ATP binding"/>
    <property type="evidence" value="ECO:0007669"/>
    <property type="project" value="UniProtKB-UniRule"/>
</dbReference>
<dbReference type="GO" id="GO:0004329">
    <property type="term" value="F:formate-tetrahydrofolate ligase activity"/>
    <property type="evidence" value="ECO:0007669"/>
    <property type="project" value="UniProtKB-UniRule"/>
</dbReference>
<dbReference type="GO" id="GO:0035999">
    <property type="term" value="P:tetrahydrofolate interconversion"/>
    <property type="evidence" value="ECO:0007669"/>
    <property type="project" value="UniProtKB-UniRule"/>
</dbReference>
<dbReference type="CDD" id="cd00477">
    <property type="entry name" value="FTHFS"/>
    <property type="match status" value="1"/>
</dbReference>
<dbReference type="FunFam" id="3.10.410.10:FF:000001">
    <property type="entry name" value="Putative formate--tetrahydrofolate ligase"/>
    <property type="match status" value="1"/>
</dbReference>
<dbReference type="Gene3D" id="3.30.1510.10">
    <property type="entry name" value="Domain 2, N(10)-formyltetrahydrofolate synthetase"/>
    <property type="match status" value="1"/>
</dbReference>
<dbReference type="Gene3D" id="3.10.410.10">
    <property type="entry name" value="Formyltetrahydrofolate synthetase, domain 3"/>
    <property type="match status" value="1"/>
</dbReference>
<dbReference type="Gene3D" id="3.40.50.300">
    <property type="entry name" value="P-loop containing nucleotide triphosphate hydrolases"/>
    <property type="match status" value="1"/>
</dbReference>
<dbReference type="HAMAP" id="MF_01543">
    <property type="entry name" value="FTHFS"/>
    <property type="match status" value="1"/>
</dbReference>
<dbReference type="InterPro" id="IPR000559">
    <property type="entry name" value="Formate_THF_ligase"/>
</dbReference>
<dbReference type="InterPro" id="IPR020628">
    <property type="entry name" value="Formate_THF_ligase_CS"/>
</dbReference>
<dbReference type="InterPro" id="IPR027417">
    <property type="entry name" value="P-loop_NTPase"/>
</dbReference>
<dbReference type="NCBIfam" id="NF010030">
    <property type="entry name" value="PRK13505.1"/>
    <property type="match status" value="1"/>
</dbReference>
<dbReference type="NCBIfam" id="NF010031">
    <property type="entry name" value="PRK13506.1"/>
    <property type="match status" value="1"/>
</dbReference>
<dbReference type="Pfam" id="PF01268">
    <property type="entry name" value="FTHFS"/>
    <property type="match status" value="1"/>
</dbReference>
<dbReference type="SUPFAM" id="SSF52540">
    <property type="entry name" value="P-loop containing nucleoside triphosphate hydrolases"/>
    <property type="match status" value="1"/>
</dbReference>
<dbReference type="PROSITE" id="PS00721">
    <property type="entry name" value="FTHFS_1"/>
    <property type="match status" value="1"/>
</dbReference>